<sequence length="152" mass="15648">MYQAGVDFGTISLTPILHGVVATVLYFLVGAAVLVAGFLMVNLLTPGDLRRLVFIDRRPNAVVLAATMYVALAIVTIAAIYASSNQLAQGLIGVAVYGIVGVALQGVALVILEIAVPGRFREHIDAPALHPAVFATAVMLLAVAGVIAAALS</sequence>
<protein>
    <recommendedName>
        <fullName>UPF0719 transmembrane protein MT2674.1</fullName>
    </recommendedName>
</protein>
<keyword id="KW-1003">Cell membrane</keyword>
<keyword id="KW-0472">Membrane</keyword>
<keyword id="KW-1185">Reference proteome</keyword>
<keyword id="KW-0812">Transmembrane</keyword>
<keyword id="KW-1133">Transmembrane helix</keyword>
<name>Y2600_MYCTO</name>
<proteinExistence type="inferred from homology"/>
<reference key="1">
    <citation type="journal article" date="2002" name="J. Bacteriol.">
        <title>Whole-genome comparison of Mycobacterium tuberculosis clinical and laboratory strains.</title>
        <authorList>
            <person name="Fleischmann R.D."/>
            <person name="Alland D."/>
            <person name="Eisen J.A."/>
            <person name="Carpenter L."/>
            <person name="White O."/>
            <person name="Peterson J.D."/>
            <person name="DeBoy R.T."/>
            <person name="Dodson R.J."/>
            <person name="Gwinn M.L."/>
            <person name="Haft D.H."/>
            <person name="Hickey E.K."/>
            <person name="Kolonay J.F."/>
            <person name="Nelson W.C."/>
            <person name="Umayam L.A."/>
            <person name="Ermolaeva M.D."/>
            <person name="Salzberg S.L."/>
            <person name="Delcher A."/>
            <person name="Utterback T.R."/>
            <person name="Weidman J.F."/>
            <person name="Khouri H.M."/>
            <person name="Gill J."/>
            <person name="Mikula A."/>
            <person name="Bishai W."/>
            <person name="Jacobs W.R. Jr."/>
            <person name="Venter J.C."/>
            <person name="Fraser C.M."/>
        </authorList>
    </citation>
    <scope>NUCLEOTIDE SEQUENCE [LARGE SCALE GENOMIC DNA]</scope>
    <source>
        <strain>CDC 1551 / Oshkosh</strain>
    </source>
</reference>
<gene>
    <name type="ordered locus">MT2674.1</name>
</gene>
<evidence type="ECO:0000255" key="1"/>
<evidence type="ECO:0000305" key="2"/>
<organism>
    <name type="scientific">Mycobacterium tuberculosis (strain CDC 1551 / Oshkosh)</name>
    <dbReference type="NCBI Taxonomy" id="83331"/>
    <lineage>
        <taxon>Bacteria</taxon>
        <taxon>Bacillati</taxon>
        <taxon>Actinomycetota</taxon>
        <taxon>Actinomycetes</taxon>
        <taxon>Mycobacteriales</taxon>
        <taxon>Mycobacteriaceae</taxon>
        <taxon>Mycobacterium</taxon>
        <taxon>Mycobacterium tuberculosis complex</taxon>
    </lineage>
</organism>
<accession>P9WFG4</accession>
<accession>L0TAC7</accession>
<accession>P68915</accession>
<accession>Q50621</accession>
<feature type="chain" id="PRO_0000428543" description="UPF0719 transmembrane protein MT2674.1">
    <location>
        <begin position="1"/>
        <end position="152"/>
    </location>
</feature>
<feature type="transmembrane region" description="Helical" evidence="1">
    <location>
        <begin position="21"/>
        <end position="41"/>
    </location>
</feature>
<feature type="transmembrane region" description="Helical" evidence="1">
    <location>
        <begin position="62"/>
        <end position="82"/>
    </location>
</feature>
<feature type="transmembrane region" description="Helical" evidence="1">
    <location>
        <begin position="92"/>
        <end position="112"/>
    </location>
</feature>
<feature type="transmembrane region" description="Helical" evidence="1">
    <location>
        <begin position="131"/>
        <end position="151"/>
    </location>
</feature>
<dbReference type="EMBL" id="AE000516">
    <property type="protein sequence ID" value="AAK46990.1"/>
    <property type="molecule type" value="Genomic_DNA"/>
</dbReference>
<dbReference type="PIR" id="G70727">
    <property type="entry name" value="G70727"/>
</dbReference>
<dbReference type="RefSeq" id="WP_003413451.1">
    <property type="nucleotide sequence ID" value="NZ_KK341227.1"/>
</dbReference>
<dbReference type="KEGG" id="mtc:MT2674.1"/>
<dbReference type="HOGENOM" id="CLU_135044_0_0_11"/>
<dbReference type="Proteomes" id="UP000001020">
    <property type="component" value="Chromosome"/>
</dbReference>
<dbReference type="GO" id="GO:0005886">
    <property type="term" value="C:plasma membrane"/>
    <property type="evidence" value="ECO:0007669"/>
    <property type="project" value="UniProtKB-SubCell"/>
</dbReference>
<dbReference type="InterPro" id="IPR007140">
    <property type="entry name" value="DUF350"/>
</dbReference>
<dbReference type="Pfam" id="PF03994">
    <property type="entry name" value="DUF350"/>
    <property type="match status" value="1"/>
</dbReference>
<comment type="subcellular location">
    <subcellularLocation>
        <location evidence="2">Cell membrane</location>
        <topology evidence="2">Multi-pass membrane protein</topology>
    </subcellularLocation>
</comment>
<comment type="similarity">
    <text evidence="2">Belongs to the UPF0719 family.</text>
</comment>